<feature type="chain" id="PRO_0000205348" description="Uncharacterized protein SCO3924">
    <location>
        <begin position="1"/>
        <end position="70"/>
    </location>
</feature>
<feature type="transmembrane region" description="Helical" evidence="1">
    <location>
        <begin position="19"/>
        <end position="39"/>
    </location>
</feature>
<feature type="transmembrane region" description="Helical" evidence="1">
    <location>
        <begin position="40"/>
        <end position="60"/>
    </location>
</feature>
<organism>
    <name type="scientific">Streptomyces coelicolor (strain ATCC BAA-471 / A3(2) / M145)</name>
    <dbReference type="NCBI Taxonomy" id="100226"/>
    <lineage>
        <taxon>Bacteria</taxon>
        <taxon>Bacillati</taxon>
        <taxon>Actinomycetota</taxon>
        <taxon>Actinomycetes</taxon>
        <taxon>Kitasatosporales</taxon>
        <taxon>Streptomycetaceae</taxon>
        <taxon>Streptomyces</taxon>
        <taxon>Streptomyces albidoflavus group</taxon>
    </lineage>
</organism>
<gene>
    <name type="ordered locus">SCO3924</name>
    <name type="ORF">SCQ11.07</name>
</gene>
<keyword id="KW-1003">Cell membrane</keyword>
<keyword id="KW-0472">Membrane</keyword>
<keyword id="KW-1185">Reference proteome</keyword>
<keyword id="KW-0812">Transmembrane</keyword>
<keyword id="KW-1133">Transmembrane helix</keyword>
<proteinExistence type="predicted"/>
<comment type="subcellular location">
    <subcellularLocation>
        <location evidence="2">Cell membrane</location>
        <topology evidence="2">Multi-pass membrane protein</topology>
    </subcellularLocation>
</comment>
<protein>
    <recommendedName>
        <fullName>Uncharacterized protein SCO3924</fullName>
    </recommendedName>
</protein>
<evidence type="ECO:0000255" key="1"/>
<evidence type="ECO:0000305" key="2"/>
<dbReference type="EMBL" id="AL939118">
    <property type="protein sequence ID" value="CAB46962.1"/>
    <property type="molecule type" value="Genomic_DNA"/>
</dbReference>
<dbReference type="EMBL" id="U37580">
    <property type="protein sequence ID" value="AAC43611.1"/>
    <property type="molecule type" value="Genomic_DNA"/>
</dbReference>
<dbReference type="PIR" id="T37177">
    <property type="entry name" value="T37177"/>
</dbReference>
<dbReference type="RefSeq" id="NP_628109.1">
    <property type="nucleotide sequence ID" value="NC_003888.3"/>
</dbReference>
<dbReference type="RefSeq" id="WP_011029311.1">
    <property type="nucleotide sequence ID" value="NZ_VNID01000003.1"/>
</dbReference>
<dbReference type="SMR" id="Q53866"/>
<dbReference type="STRING" id="100226.gene:17761551"/>
<dbReference type="PaxDb" id="100226-SCO3924"/>
<dbReference type="KEGG" id="sco:SCO3924"/>
<dbReference type="PATRIC" id="fig|100226.15.peg.3998"/>
<dbReference type="eggNOG" id="ENOG502ZVRX">
    <property type="taxonomic scope" value="Bacteria"/>
</dbReference>
<dbReference type="HOGENOM" id="CLU_204029_0_0_11"/>
<dbReference type="InParanoid" id="Q53866"/>
<dbReference type="Proteomes" id="UP000001973">
    <property type="component" value="Chromosome"/>
</dbReference>
<dbReference type="GO" id="GO:0005886">
    <property type="term" value="C:plasma membrane"/>
    <property type="evidence" value="ECO:0007669"/>
    <property type="project" value="UniProtKB-SubCell"/>
</dbReference>
<dbReference type="InterPro" id="IPR020246">
    <property type="entry name" value="Uncharacterised_SCO3924"/>
</dbReference>
<dbReference type="Pfam" id="PF17260">
    <property type="entry name" value="DUF5326"/>
    <property type="match status" value="1"/>
</dbReference>
<name>Y3924_STRCO</name>
<sequence>MREIFTGLPWWVKWIAVPVIALVVFGGLIVSVVGFVVGLLFKLLVFVALVGGLIYVVRKFMSSSSSRSDW</sequence>
<accession>Q53866</accession>
<accession>Q9S1M7</accession>
<reference key="1">
    <citation type="journal article" date="2002" name="Nature">
        <title>Complete genome sequence of the model actinomycete Streptomyces coelicolor A3(2).</title>
        <authorList>
            <person name="Bentley S.D."/>
            <person name="Chater K.F."/>
            <person name="Cerdeno-Tarraga A.-M."/>
            <person name="Challis G.L."/>
            <person name="Thomson N.R."/>
            <person name="James K.D."/>
            <person name="Harris D.E."/>
            <person name="Quail M.A."/>
            <person name="Kieser H."/>
            <person name="Harper D."/>
            <person name="Bateman A."/>
            <person name="Brown S."/>
            <person name="Chandra G."/>
            <person name="Chen C.W."/>
            <person name="Collins M."/>
            <person name="Cronin A."/>
            <person name="Fraser A."/>
            <person name="Goble A."/>
            <person name="Hidalgo J."/>
            <person name="Hornsby T."/>
            <person name="Howarth S."/>
            <person name="Huang C.-H."/>
            <person name="Kieser T."/>
            <person name="Larke L."/>
            <person name="Murphy L.D."/>
            <person name="Oliver K."/>
            <person name="O'Neil S."/>
            <person name="Rabbinowitsch E."/>
            <person name="Rajandream M.A."/>
            <person name="Rutherford K.M."/>
            <person name="Rutter S."/>
            <person name="Seeger K."/>
            <person name="Saunders D."/>
            <person name="Sharp S."/>
            <person name="Squares R."/>
            <person name="Squares S."/>
            <person name="Taylor K."/>
            <person name="Warren T."/>
            <person name="Wietzorrek A."/>
            <person name="Woodward J.R."/>
            <person name="Barrell B.G."/>
            <person name="Parkhill J."/>
            <person name="Hopwood D.A."/>
        </authorList>
    </citation>
    <scope>NUCLEOTIDE SEQUENCE [LARGE SCALE GENOMIC DNA]</scope>
    <source>
        <strain>ATCC BAA-471 / A3(2) / M145</strain>
    </source>
</reference>
<reference key="2">
    <citation type="journal article" date="1996" name="J. Bacteriol.">
        <title>Cloning, purification, and properties of a phosphotyrosine protein phosphatase from Streptomyces coelicolor A3(2).</title>
        <authorList>
            <person name="Li Y."/>
            <person name="Strohl W.R."/>
        </authorList>
    </citation>
    <scope>NUCLEOTIDE SEQUENCE [GENOMIC DNA] OF 1-64</scope>
    <source>
        <strain>A3(2) / 1147</strain>
    </source>
</reference>